<gene>
    <name evidence="1" type="primary">thyA</name>
    <name type="ordered locus">FTH_0717</name>
</gene>
<reference key="1">
    <citation type="journal article" date="2006" name="J. Bacteriol.">
        <title>Chromosome rearrangement and diversification of Francisella tularensis revealed by the type B (OSU18) genome sequence.</title>
        <authorList>
            <person name="Petrosino J.F."/>
            <person name="Xiang Q."/>
            <person name="Karpathy S.E."/>
            <person name="Jiang H."/>
            <person name="Yerrapragada S."/>
            <person name="Liu Y."/>
            <person name="Gioia J."/>
            <person name="Hemphill L."/>
            <person name="Gonzalez A."/>
            <person name="Raghavan T.M."/>
            <person name="Uzman A."/>
            <person name="Fox G.E."/>
            <person name="Highlander S."/>
            <person name="Reichard M."/>
            <person name="Morton R.J."/>
            <person name="Clinkenbeard K.D."/>
            <person name="Weinstock G.M."/>
        </authorList>
    </citation>
    <scope>NUCLEOTIDE SEQUENCE [LARGE SCALE GENOMIC DNA]</scope>
    <source>
        <strain>OSU18</strain>
    </source>
</reference>
<keyword id="KW-0963">Cytoplasm</keyword>
<keyword id="KW-0489">Methyltransferase</keyword>
<keyword id="KW-0545">Nucleotide biosynthesis</keyword>
<keyword id="KW-0808">Transferase</keyword>
<feature type="chain" id="PRO_1000000601" description="Thymidylate synthase">
    <location>
        <begin position="1"/>
        <end position="274"/>
    </location>
</feature>
<feature type="active site" description="Nucleophile" evidence="1">
    <location>
        <position position="156"/>
    </location>
</feature>
<feature type="binding site" description="in other chain" evidence="1">
    <location>
        <position position="21"/>
    </location>
    <ligand>
        <name>dUMP</name>
        <dbReference type="ChEBI" id="CHEBI:246422"/>
        <note>ligand shared between dimeric partners</note>
    </ligand>
</feature>
<feature type="binding site" evidence="1">
    <location>
        <position position="51"/>
    </location>
    <ligand>
        <name>(6R)-5,10-methylene-5,6,7,8-tetrahydrofolate</name>
        <dbReference type="ChEBI" id="CHEBI:15636"/>
    </ligand>
</feature>
<feature type="binding site" evidence="1">
    <location>
        <begin position="123"/>
        <end position="124"/>
    </location>
    <ligand>
        <name>dUMP</name>
        <dbReference type="ChEBI" id="CHEBI:246422"/>
        <note>ligand shared between dimeric partners</note>
    </ligand>
</feature>
<feature type="binding site" description="in other chain" evidence="1">
    <location>
        <begin position="176"/>
        <end position="179"/>
    </location>
    <ligand>
        <name>dUMP</name>
        <dbReference type="ChEBI" id="CHEBI:246422"/>
        <note>ligand shared between dimeric partners</note>
    </ligand>
</feature>
<feature type="binding site" evidence="1">
    <location>
        <position position="179"/>
    </location>
    <ligand>
        <name>(6R)-5,10-methylene-5,6,7,8-tetrahydrofolate</name>
        <dbReference type="ChEBI" id="CHEBI:15636"/>
    </ligand>
</feature>
<feature type="binding site" description="in other chain" evidence="1">
    <location>
        <position position="187"/>
    </location>
    <ligand>
        <name>dUMP</name>
        <dbReference type="ChEBI" id="CHEBI:246422"/>
        <note>ligand shared between dimeric partners</note>
    </ligand>
</feature>
<feature type="binding site" description="in other chain" evidence="1">
    <location>
        <begin position="217"/>
        <end position="219"/>
    </location>
    <ligand>
        <name>dUMP</name>
        <dbReference type="ChEBI" id="CHEBI:246422"/>
        <note>ligand shared between dimeric partners</note>
    </ligand>
</feature>
<feature type="binding site" evidence="1">
    <location>
        <position position="273"/>
    </location>
    <ligand>
        <name>(6R)-5,10-methylene-5,6,7,8-tetrahydrofolate</name>
        <dbReference type="ChEBI" id="CHEBI:15636"/>
    </ligand>
</feature>
<sequence length="274" mass="31415">MREYLNFLKYIKENGVLKNDRTGTGTRSIFGYQMRFDLQKGFPLVTTKKIHIPSVVHELLWFLSGSTNIKYLNDNNVRIWNEWATVDGELGPIYGKQWRDFNGQGIDQIADVIQMLKTNPNSRRILVLAWNPCVVPSEKISPQENVVKGNSALPPCHAMFQFYVANNKLSCMLTQRSADAFLGVPFNIASYSLLTHMVAQQCNLDVGELIWSGGDCHIYNNHIEQVNEQLSREPLALPTLKILRKSNSIFDYKYEDFEFENYNHHPAIKAKISV</sequence>
<organism>
    <name type="scientific">Francisella tularensis subsp. holarctica (strain OSU18)</name>
    <dbReference type="NCBI Taxonomy" id="393011"/>
    <lineage>
        <taxon>Bacteria</taxon>
        <taxon>Pseudomonadati</taxon>
        <taxon>Pseudomonadota</taxon>
        <taxon>Gammaproteobacteria</taxon>
        <taxon>Thiotrichales</taxon>
        <taxon>Francisellaceae</taxon>
        <taxon>Francisella</taxon>
    </lineage>
</organism>
<accession>Q0BMM0</accession>
<evidence type="ECO:0000255" key="1">
    <source>
        <dbReference type="HAMAP-Rule" id="MF_00008"/>
    </source>
</evidence>
<name>TYSY_FRATO</name>
<proteinExistence type="inferred from homology"/>
<protein>
    <recommendedName>
        <fullName evidence="1">Thymidylate synthase</fullName>
        <shortName evidence="1">TS</shortName>
        <shortName evidence="1">TSase</shortName>
        <ecNumber evidence="1">2.1.1.45</ecNumber>
    </recommendedName>
</protein>
<comment type="function">
    <text evidence="1">Catalyzes the reductive methylation of 2'-deoxyuridine-5'-monophosphate (dUMP) to 2'-deoxythymidine-5'-monophosphate (dTMP) while utilizing 5,10-methylenetetrahydrofolate (mTHF) as the methyl donor and reductant in the reaction, yielding dihydrofolate (DHF) as a by-product. This enzymatic reaction provides an intracellular de novo source of dTMP, an essential precursor for DNA biosynthesis.</text>
</comment>
<comment type="catalytic activity">
    <reaction evidence="1">
        <text>dUMP + (6R)-5,10-methylene-5,6,7,8-tetrahydrofolate = 7,8-dihydrofolate + dTMP</text>
        <dbReference type="Rhea" id="RHEA:12104"/>
        <dbReference type="ChEBI" id="CHEBI:15636"/>
        <dbReference type="ChEBI" id="CHEBI:57451"/>
        <dbReference type="ChEBI" id="CHEBI:63528"/>
        <dbReference type="ChEBI" id="CHEBI:246422"/>
        <dbReference type="EC" id="2.1.1.45"/>
    </reaction>
</comment>
<comment type="pathway">
    <text evidence="1">Pyrimidine metabolism; dTTP biosynthesis.</text>
</comment>
<comment type="subunit">
    <text evidence="1">Homodimer.</text>
</comment>
<comment type="subcellular location">
    <subcellularLocation>
        <location evidence="1">Cytoplasm</location>
    </subcellularLocation>
</comment>
<comment type="similarity">
    <text evidence="1">Belongs to the thymidylate synthase family. Bacterial-type ThyA subfamily.</text>
</comment>
<dbReference type="EC" id="2.1.1.45" evidence="1"/>
<dbReference type="EMBL" id="CP000437">
    <property type="protein sequence ID" value="ABI82664.1"/>
    <property type="molecule type" value="Genomic_DNA"/>
</dbReference>
<dbReference type="RefSeq" id="WP_003015196.1">
    <property type="nucleotide sequence ID" value="NC_017463.1"/>
</dbReference>
<dbReference type="SMR" id="Q0BMM0"/>
<dbReference type="KEGG" id="fth:FTH_0717"/>
<dbReference type="UniPathway" id="UPA00575"/>
<dbReference type="GO" id="GO:0005829">
    <property type="term" value="C:cytosol"/>
    <property type="evidence" value="ECO:0007669"/>
    <property type="project" value="TreeGrafter"/>
</dbReference>
<dbReference type="GO" id="GO:0004799">
    <property type="term" value="F:thymidylate synthase activity"/>
    <property type="evidence" value="ECO:0007669"/>
    <property type="project" value="UniProtKB-UniRule"/>
</dbReference>
<dbReference type="GO" id="GO:0006231">
    <property type="term" value="P:dTMP biosynthetic process"/>
    <property type="evidence" value="ECO:0007669"/>
    <property type="project" value="UniProtKB-UniRule"/>
</dbReference>
<dbReference type="GO" id="GO:0006235">
    <property type="term" value="P:dTTP biosynthetic process"/>
    <property type="evidence" value="ECO:0007669"/>
    <property type="project" value="UniProtKB-UniRule"/>
</dbReference>
<dbReference type="GO" id="GO:0032259">
    <property type="term" value="P:methylation"/>
    <property type="evidence" value="ECO:0007669"/>
    <property type="project" value="UniProtKB-KW"/>
</dbReference>
<dbReference type="CDD" id="cd00351">
    <property type="entry name" value="TS_Pyrimidine_HMase"/>
    <property type="match status" value="1"/>
</dbReference>
<dbReference type="FunFam" id="3.30.572.10:FF:000013">
    <property type="entry name" value="Thymidylate synthase"/>
    <property type="match status" value="1"/>
</dbReference>
<dbReference type="Gene3D" id="3.30.572.10">
    <property type="entry name" value="Thymidylate synthase/dCMP hydroxymethylase domain"/>
    <property type="match status" value="1"/>
</dbReference>
<dbReference type="HAMAP" id="MF_00008">
    <property type="entry name" value="Thymidy_synth_bact"/>
    <property type="match status" value="1"/>
</dbReference>
<dbReference type="InterPro" id="IPR045097">
    <property type="entry name" value="Thymidate_synth/dCMP_Mease"/>
</dbReference>
<dbReference type="InterPro" id="IPR023451">
    <property type="entry name" value="Thymidate_synth/dCMP_Mease_dom"/>
</dbReference>
<dbReference type="InterPro" id="IPR036926">
    <property type="entry name" value="Thymidate_synth/dCMP_Mease_sf"/>
</dbReference>
<dbReference type="InterPro" id="IPR000398">
    <property type="entry name" value="Thymidylate_synthase"/>
</dbReference>
<dbReference type="NCBIfam" id="NF002497">
    <property type="entry name" value="PRK01827.1-3"/>
    <property type="match status" value="1"/>
</dbReference>
<dbReference type="NCBIfam" id="NF002499">
    <property type="entry name" value="PRK01827.1-5"/>
    <property type="match status" value="1"/>
</dbReference>
<dbReference type="NCBIfam" id="TIGR03284">
    <property type="entry name" value="thym_sym"/>
    <property type="match status" value="2"/>
</dbReference>
<dbReference type="PANTHER" id="PTHR11548">
    <property type="entry name" value="THYMIDYLATE SYNTHASE 1"/>
    <property type="match status" value="1"/>
</dbReference>
<dbReference type="PANTHER" id="PTHR11548:SF1">
    <property type="entry name" value="THYMIDYLATE SYNTHASE 1"/>
    <property type="match status" value="1"/>
</dbReference>
<dbReference type="Pfam" id="PF00303">
    <property type="entry name" value="Thymidylat_synt"/>
    <property type="match status" value="1"/>
</dbReference>
<dbReference type="PRINTS" id="PR00108">
    <property type="entry name" value="THYMDSNTHASE"/>
</dbReference>
<dbReference type="SUPFAM" id="SSF55831">
    <property type="entry name" value="Thymidylate synthase/dCMP hydroxymethylase"/>
    <property type="match status" value="1"/>
</dbReference>